<keyword id="KW-0175">Coiled coil</keyword>
<keyword id="KW-0963">Cytoplasm</keyword>
<keyword id="KW-0206">Cytoskeleton</keyword>
<keyword id="KW-0469">Meiosis</keyword>
<keyword id="KW-1185">Reference proteome</keyword>
<keyword id="KW-0749">Sporulation</keyword>
<organism>
    <name type="scientific">Schizosaccharomyces pombe (strain 972 / ATCC 24843)</name>
    <name type="common">Fission yeast</name>
    <dbReference type="NCBI Taxonomy" id="284812"/>
    <lineage>
        <taxon>Eukaryota</taxon>
        <taxon>Fungi</taxon>
        <taxon>Dikarya</taxon>
        <taxon>Ascomycota</taxon>
        <taxon>Taphrinomycotina</taxon>
        <taxon>Schizosaccharomycetes</taxon>
        <taxon>Schizosaccharomycetales</taxon>
        <taxon>Schizosaccharomycetaceae</taxon>
        <taxon>Schizosaccharomyces</taxon>
    </lineage>
</organism>
<gene>
    <name type="primary">spo13</name>
    <name type="ORF">SPCC1183.12</name>
</gene>
<name>SPO13_SCHPO</name>
<sequence length="138" mass="15862">MMSNSQISKLFSSISNKENSNENALKESTNKQLNNANTLAITHLKEQLSREVQRREELEGLLEQSQKEMEDLSVSLFTEANEMVAKARQDTEVLKRELDYLRAKEKGRIGKLRSIQTAVRTSIEARKLLSYSNESNYH</sequence>
<protein>
    <recommendedName>
        <fullName>Sporulation-specific protein 13</fullName>
    </recommendedName>
</protein>
<dbReference type="EMBL" id="CU329672">
    <property type="protein sequence ID" value="CBA11516.1"/>
    <property type="molecule type" value="Genomic_DNA"/>
</dbReference>
<dbReference type="RefSeq" id="XP_002788948.1">
    <property type="nucleotide sequence ID" value="XM_002788902.2"/>
</dbReference>
<dbReference type="SMR" id="C6Y4C9"/>
<dbReference type="BioGRID" id="1028402">
    <property type="interactions" value="4"/>
</dbReference>
<dbReference type="FunCoup" id="C6Y4C9">
    <property type="interactions" value="2"/>
</dbReference>
<dbReference type="STRING" id="284812.C6Y4C9"/>
<dbReference type="PaxDb" id="4896-SPCC1183.12.1"/>
<dbReference type="EnsemblFungi" id="SPCC1183.12.1">
    <property type="protein sequence ID" value="SPCC1183.12.1:pep"/>
    <property type="gene ID" value="SPCC1183.12"/>
</dbReference>
<dbReference type="PomBase" id="SPCC1183.12">
    <property type="gene designation" value="spo13"/>
</dbReference>
<dbReference type="VEuPathDB" id="FungiDB:SPCC1183.12"/>
<dbReference type="HOGENOM" id="CLU_1856456_0_0_1"/>
<dbReference type="InParanoid" id="C6Y4C9"/>
<dbReference type="OMA" id="RELDYHE"/>
<dbReference type="PRO" id="PR:C6Y4C9"/>
<dbReference type="Proteomes" id="UP000002485">
    <property type="component" value="Chromosome III"/>
</dbReference>
<dbReference type="GO" id="GO:0005737">
    <property type="term" value="C:cytoplasm"/>
    <property type="evidence" value="ECO:0007669"/>
    <property type="project" value="UniProtKB-KW"/>
</dbReference>
<dbReference type="GO" id="GO:0035974">
    <property type="term" value="C:meiotic spindle pole body"/>
    <property type="evidence" value="ECO:0000314"/>
    <property type="project" value="CACAO"/>
</dbReference>
<dbReference type="GO" id="GO:0005085">
    <property type="term" value="F:guanyl-nucleotide exchange factor activity"/>
    <property type="evidence" value="ECO:0000314"/>
    <property type="project" value="PomBase"/>
</dbReference>
<dbReference type="GO" id="GO:0030437">
    <property type="term" value="P:ascospore formation"/>
    <property type="evidence" value="ECO:0000315"/>
    <property type="project" value="PomBase"/>
</dbReference>
<dbReference type="GO" id="GO:0032120">
    <property type="term" value="P:ascospore-type prospore membrane formation"/>
    <property type="evidence" value="ECO:0000315"/>
    <property type="project" value="PomBase"/>
</dbReference>
<dbReference type="GO" id="GO:0031322">
    <property type="term" value="P:ascospore-type prospore-specific spindle pole body remodeling"/>
    <property type="evidence" value="ECO:0000315"/>
    <property type="project" value="PomBase"/>
</dbReference>
<dbReference type="GO" id="GO:1902441">
    <property type="term" value="P:protein localization to meiotic spindle pole body"/>
    <property type="evidence" value="ECO:0000315"/>
    <property type="project" value="PomBase"/>
</dbReference>
<dbReference type="Gene3D" id="6.10.140.910">
    <property type="match status" value="1"/>
</dbReference>
<dbReference type="InterPro" id="IPR040351">
    <property type="entry name" value="RAB3IL/RAB3IP/Sec2"/>
</dbReference>
<dbReference type="InterPro" id="IPR009449">
    <property type="entry name" value="Sec2_N"/>
</dbReference>
<dbReference type="PANTHER" id="PTHR14430:SF4">
    <property type="entry name" value="GDP_GTP EXCHANGE FACTOR SEC2 N-TERMINAL DOMAIN-CONTAINING PROTEIN"/>
    <property type="match status" value="1"/>
</dbReference>
<dbReference type="PANTHER" id="PTHR14430">
    <property type="entry name" value="RABIN3-RELATED"/>
    <property type="match status" value="1"/>
</dbReference>
<dbReference type="Pfam" id="PF06428">
    <property type="entry name" value="Sec2p"/>
    <property type="match status" value="1"/>
</dbReference>
<dbReference type="SUPFAM" id="SSF144284">
    <property type="entry name" value="Sec2 N-terminal region"/>
    <property type="match status" value="1"/>
</dbReference>
<evidence type="ECO:0000255" key="1"/>
<evidence type="ECO:0000256" key="2">
    <source>
        <dbReference type="SAM" id="MobiDB-lite"/>
    </source>
</evidence>
<evidence type="ECO:0000269" key="3">
    <source>
    </source>
</evidence>
<feature type="chain" id="PRO_0000389118" description="Sporulation-specific protein 13">
    <location>
        <begin position="1"/>
        <end position="138"/>
    </location>
</feature>
<feature type="region of interest" description="Disordered" evidence="2">
    <location>
        <begin position="1"/>
        <end position="31"/>
    </location>
</feature>
<feature type="coiled-coil region" evidence="1">
    <location>
        <begin position="16"/>
        <end position="104"/>
    </location>
</feature>
<feature type="compositionally biased region" description="Polar residues" evidence="2">
    <location>
        <begin position="1"/>
        <end position="11"/>
    </location>
</feature>
<feature type="compositionally biased region" description="Low complexity" evidence="2">
    <location>
        <begin position="12"/>
        <end position="23"/>
    </location>
</feature>
<reference key="1">
    <citation type="journal article" date="2002" name="Nature">
        <title>The genome sequence of Schizosaccharomyces pombe.</title>
        <authorList>
            <person name="Wood V."/>
            <person name="Gwilliam R."/>
            <person name="Rajandream M.A."/>
            <person name="Lyne M.H."/>
            <person name="Lyne R."/>
            <person name="Stewart A."/>
            <person name="Sgouros J.G."/>
            <person name="Peat N."/>
            <person name="Hayles J."/>
            <person name="Baker S.G."/>
            <person name="Basham D."/>
            <person name="Bowman S."/>
            <person name="Brooks K."/>
            <person name="Brown D."/>
            <person name="Brown S."/>
            <person name="Chillingworth T."/>
            <person name="Churcher C.M."/>
            <person name="Collins M."/>
            <person name="Connor R."/>
            <person name="Cronin A."/>
            <person name="Davis P."/>
            <person name="Feltwell T."/>
            <person name="Fraser A."/>
            <person name="Gentles S."/>
            <person name="Goble A."/>
            <person name="Hamlin N."/>
            <person name="Harris D.E."/>
            <person name="Hidalgo J."/>
            <person name="Hodgson G."/>
            <person name="Holroyd S."/>
            <person name="Hornsby T."/>
            <person name="Howarth S."/>
            <person name="Huckle E.J."/>
            <person name="Hunt S."/>
            <person name="Jagels K."/>
            <person name="James K.D."/>
            <person name="Jones L."/>
            <person name="Jones M."/>
            <person name="Leather S."/>
            <person name="McDonald S."/>
            <person name="McLean J."/>
            <person name="Mooney P."/>
            <person name="Moule S."/>
            <person name="Mungall K.L."/>
            <person name="Murphy L.D."/>
            <person name="Niblett D."/>
            <person name="Odell C."/>
            <person name="Oliver K."/>
            <person name="O'Neil S."/>
            <person name="Pearson D."/>
            <person name="Quail M.A."/>
            <person name="Rabbinowitsch E."/>
            <person name="Rutherford K.M."/>
            <person name="Rutter S."/>
            <person name="Saunders D."/>
            <person name="Seeger K."/>
            <person name="Sharp S."/>
            <person name="Skelton J."/>
            <person name="Simmonds M.N."/>
            <person name="Squares R."/>
            <person name="Squares S."/>
            <person name="Stevens K."/>
            <person name="Taylor K."/>
            <person name="Taylor R.G."/>
            <person name="Tivey A."/>
            <person name="Walsh S.V."/>
            <person name="Warren T."/>
            <person name="Whitehead S."/>
            <person name="Woodward J.R."/>
            <person name="Volckaert G."/>
            <person name="Aert R."/>
            <person name="Robben J."/>
            <person name="Grymonprez B."/>
            <person name="Weltjens I."/>
            <person name="Vanstreels E."/>
            <person name="Rieger M."/>
            <person name="Schaefer M."/>
            <person name="Mueller-Auer S."/>
            <person name="Gabel C."/>
            <person name="Fuchs M."/>
            <person name="Duesterhoeft A."/>
            <person name="Fritzc C."/>
            <person name="Holzer E."/>
            <person name="Moestl D."/>
            <person name="Hilbert H."/>
            <person name="Borzym K."/>
            <person name="Langer I."/>
            <person name="Beck A."/>
            <person name="Lehrach H."/>
            <person name="Reinhardt R."/>
            <person name="Pohl T.M."/>
            <person name="Eger P."/>
            <person name="Zimmermann W."/>
            <person name="Wedler H."/>
            <person name="Wambutt R."/>
            <person name="Purnelle B."/>
            <person name="Goffeau A."/>
            <person name="Cadieu E."/>
            <person name="Dreano S."/>
            <person name="Gloux S."/>
            <person name="Lelaure V."/>
            <person name="Mottier S."/>
            <person name="Galibert F."/>
            <person name="Aves S.J."/>
            <person name="Xiang Z."/>
            <person name="Hunt C."/>
            <person name="Moore K."/>
            <person name="Hurst S.M."/>
            <person name="Lucas M."/>
            <person name="Rochet M."/>
            <person name="Gaillardin C."/>
            <person name="Tallada V.A."/>
            <person name="Garzon A."/>
            <person name="Thode G."/>
            <person name="Daga R.R."/>
            <person name="Cruzado L."/>
            <person name="Jimenez J."/>
            <person name="Sanchez M."/>
            <person name="del Rey F."/>
            <person name="Benito J."/>
            <person name="Dominguez A."/>
            <person name="Revuelta J.L."/>
            <person name="Moreno S."/>
            <person name="Armstrong J."/>
            <person name="Forsburg S.L."/>
            <person name="Cerutti L."/>
            <person name="Lowe T."/>
            <person name="McCombie W.R."/>
            <person name="Paulsen I."/>
            <person name="Potashkin J."/>
            <person name="Shpakovski G.V."/>
            <person name="Ussery D."/>
            <person name="Barrell B.G."/>
            <person name="Nurse P."/>
        </authorList>
    </citation>
    <scope>NUCLEOTIDE SEQUENCE [LARGE SCALE GENOMIC DNA]</scope>
    <source>
        <strain>972 / ATCC 24843</strain>
    </source>
</reference>
<reference key="2">
    <citation type="journal article" date="2008" name="Mol. Biol. Cell">
        <title>Meiotic spindle pole bodies acquire the ability to assemble the spore plasma membrane by sequential recruitment of sporulation-specific components in fission yeast.</title>
        <authorList>
            <person name="Nakase Y."/>
            <person name="Nakamura-Kubo M."/>
            <person name="Ye Y."/>
            <person name="Hirata A."/>
            <person name="Shimoda C."/>
            <person name="Nakamura T."/>
        </authorList>
    </citation>
    <scope>FUNCTION</scope>
    <scope>INDUCTION</scope>
    <scope>SUBCELLULAR LOCATION</scope>
    <scope>INTERACTION WITH SPO2</scope>
</reference>
<accession>C6Y4C9</accession>
<comment type="function">
    <text evidence="3">Involved in sporulation. Plays a significant role in modification of the spindle pole body prior to spore formation and is required for initiating forespore membrane formation.</text>
</comment>
<comment type="subunit">
    <text evidence="3">Interacts with spo2.</text>
</comment>
<comment type="subcellular location">
    <subcellularLocation>
        <location evidence="3">Cytoplasm</location>
        <location evidence="3">Cytoskeleton</location>
        <location evidence="3">Microtubule organizing center</location>
        <location evidence="3">Spindle pole body</location>
    </subcellularLocation>
</comment>
<comment type="induction">
    <text evidence="3">Induced during meiosis by the transcription factor mei4. Protein levels rapidly increase during meiosis and then decline.</text>
</comment>
<proteinExistence type="evidence at protein level"/>